<gene>
    <name evidence="1" type="primary">infA</name>
</gene>
<geneLocation type="chloroplast"/>
<accession>P69041</accession>
<accession>Q94PL2</accession>
<protein>
    <recommendedName>
        <fullName evidence="1">Translation initiation factor IF-1, chloroplastic</fullName>
    </recommendedName>
</protein>
<sequence>MKEQKWIHEGLITESLPNGMFRVRLDNEDLILGYVSGKIRRSFIRILPGDKVKIEVSRYDSTRGRIIYRLRNKDSKD</sequence>
<dbReference type="EMBL" id="AF347661">
    <property type="protein sequence ID" value="AAK38866.1"/>
    <property type="molecule type" value="Genomic_DNA"/>
</dbReference>
<dbReference type="SMR" id="P69041"/>
<dbReference type="GO" id="GO:0009507">
    <property type="term" value="C:chloroplast"/>
    <property type="evidence" value="ECO:0007669"/>
    <property type="project" value="UniProtKB-SubCell"/>
</dbReference>
<dbReference type="GO" id="GO:0005829">
    <property type="term" value="C:cytosol"/>
    <property type="evidence" value="ECO:0007669"/>
    <property type="project" value="TreeGrafter"/>
</dbReference>
<dbReference type="GO" id="GO:0043022">
    <property type="term" value="F:ribosome binding"/>
    <property type="evidence" value="ECO:0007669"/>
    <property type="project" value="UniProtKB-UniRule"/>
</dbReference>
<dbReference type="GO" id="GO:0019843">
    <property type="term" value="F:rRNA binding"/>
    <property type="evidence" value="ECO:0007669"/>
    <property type="project" value="UniProtKB-UniRule"/>
</dbReference>
<dbReference type="GO" id="GO:0003743">
    <property type="term" value="F:translation initiation factor activity"/>
    <property type="evidence" value="ECO:0007669"/>
    <property type="project" value="UniProtKB-UniRule"/>
</dbReference>
<dbReference type="CDD" id="cd04451">
    <property type="entry name" value="S1_IF1"/>
    <property type="match status" value="1"/>
</dbReference>
<dbReference type="FunFam" id="2.40.50.140:FF:000019">
    <property type="entry name" value="Translation initiation factor IF-1, chloroplastic"/>
    <property type="match status" value="1"/>
</dbReference>
<dbReference type="Gene3D" id="2.40.50.140">
    <property type="entry name" value="Nucleic acid-binding proteins"/>
    <property type="match status" value="1"/>
</dbReference>
<dbReference type="HAMAP" id="MF_00075">
    <property type="entry name" value="IF_1"/>
    <property type="match status" value="1"/>
</dbReference>
<dbReference type="InterPro" id="IPR012340">
    <property type="entry name" value="NA-bd_OB-fold"/>
</dbReference>
<dbReference type="InterPro" id="IPR006196">
    <property type="entry name" value="RNA-binding_domain_S1_IF1"/>
</dbReference>
<dbReference type="InterPro" id="IPR003029">
    <property type="entry name" value="S1_domain"/>
</dbReference>
<dbReference type="InterPro" id="IPR004368">
    <property type="entry name" value="TIF_IF1"/>
</dbReference>
<dbReference type="NCBIfam" id="TIGR00008">
    <property type="entry name" value="infA"/>
    <property type="match status" value="1"/>
</dbReference>
<dbReference type="PANTHER" id="PTHR33370">
    <property type="entry name" value="TRANSLATION INITIATION FACTOR IF-1, CHLOROPLASTIC"/>
    <property type="match status" value="1"/>
</dbReference>
<dbReference type="PANTHER" id="PTHR33370:SF1">
    <property type="entry name" value="TRANSLATION INITIATION FACTOR IF-1, CHLOROPLASTIC"/>
    <property type="match status" value="1"/>
</dbReference>
<dbReference type="Pfam" id="PF01176">
    <property type="entry name" value="eIF-1a"/>
    <property type="match status" value="1"/>
</dbReference>
<dbReference type="SMART" id="SM00316">
    <property type="entry name" value="S1"/>
    <property type="match status" value="1"/>
</dbReference>
<dbReference type="SUPFAM" id="SSF50249">
    <property type="entry name" value="Nucleic acid-binding proteins"/>
    <property type="match status" value="1"/>
</dbReference>
<dbReference type="PROSITE" id="PS50832">
    <property type="entry name" value="S1_IF1_TYPE"/>
    <property type="match status" value="1"/>
</dbReference>
<proteinExistence type="inferred from homology"/>
<name>IF1C_ANTMA</name>
<reference key="1">
    <citation type="journal article" date="2001" name="Plant Cell">
        <title>Many parallel losses of infA from chloroplast DNA during angiosperm evolution with multiple independent transfers to the nucleus.</title>
        <authorList>
            <person name="Millen R.S."/>
            <person name="Olmstead R.G."/>
            <person name="Adams K.L."/>
            <person name="Palmer J.D."/>
            <person name="Lao N.T."/>
            <person name="Heggie L."/>
            <person name="Kavanagh T.A."/>
            <person name="Hibberd J.M."/>
            <person name="Gray J.C."/>
            <person name="Morden C.W."/>
            <person name="Calie P.J."/>
            <person name="Jermiin L.S."/>
            <person name="Wolfe K.H."/>
        </authorList>
    </citation>
    <scope>NUCLEOTIDE SEQUENCE [GENOMIC DNA]</scope>
</reference>
<keyword id="KW-0150">Chloroplast</keyword>
<keyword id="KW-0396">Initiation factor</keyword>
<keyword id="KW-0934">Plastid</keyword>
<keyword id="KW-0648">Protein biosynthesis</keyword>
<keyword id="KW-0694">RNA-binding</keyword>
<keyword id="KW-0699">rRNA-binding</keyword>
<evidence type="ECO:0000255" key="1">
    <source>
        <dbReference type="HAMAP-Rule" id="MF_00075"/>
    </source>
</evidence>
<feature type="chain" id="PRO_0000095918" description="Translation initiation factor IF-1, chloroplastic">
    <location>
        <begin position="1"/>
        <end position="77"/>
    </location>
</feature>
<feature type="domain" description="S1-like" evidence="1">
    <location>
        <begin position="1"/>
        <end position="71"/>
    </location>
</feature>
<comment type="function">
    <text evidence="1">One of the essential components for the initiation of protein synthesis. Stabilizes the binding of IF-2 and IF-3 on the 30S subunit to which N-formylmethionyl-tRNA(fMet) subsequently binds. Helps modulate mRNA selection, yielding the 30S pre-initiation complex (PIC). Upon addition of the 50S ribosomal subunit IF-1, IF-2 and IF-3 are released leaving the mature 70S translation initiation complex.</text>
</comment>
<comment type="subunit">
    <text evidence="1">Component of the 30S ribosomal translation pre-initiation complex which assembles on the 30S ribosome in the order IF-2 and IF-3, IF-1 and N-formylmethionyl-tRNA(fMet); mRNA recruitment can occur at any time during PIC assembly.</text>
</comment>
<comment type="subcellular location">
    <subcellularLocation>
        <location evidence="1">Plastid</location>
        <location evidence="1">Chloroplast</location>
    </subcellularLocation>
</comment>
<comment type="similarity">
    <text evidence="1">Belongs to the IF-1 family.</text>
</comment>
<organism>
    <name type="scientific">Antirrhinum majus</name>
    <name type="common">Garden snapdragon</name>
    <dbReference type="NCBI Taxonomy" id="4151"/>
    <lineage>
        <taxon>Eukaryota</taxon>
        <taxon>Viridiplantae</taxon>
        <taxon>Streptophyta</taxon>
        <taxon>Embryophyta</taxon>
        <taxon>Tracheophyta</taxon>
        <taxon>Spermatophyta</taxon>
        <taxon>Magnoliopsida</taxon>
        <taxon>eudicotyledons</taxon>
        <taxon>Gunneridae</taxon>
        <taxon>Pentapetalae</taxon>
        <taxon>asterids</taxon>
        <taxon>lamiids</taxon>
        <taxon>Lamiales</taxon>
        <taxon>Plantaginaceae</taxon>
        <taxon>Antirrhineae</taxon>
        <taxon>Antirrhinum</taxon>
    </lineage>
</organism>